<evidence type="ECO:0000255" key="1">
    <source>
        <dbReference type="PROSITE-ProRule" id="PRU00080"/>
    </source>
</evidence>
<sequence>MDIISQCPDHLLLRILSFIPTKDVIVTSLLSKRWGSLWRWVPKLEYDFTRQNMRFVKFVYRSLLQNNAPVLESLHLKNIILYAECRTVDIGGWIDIAVSRRVRELEISINCSDEKFRLPSSLYTCGTLESFILTIKHCHLVDVPLAVCLPSLKKLHLRCIGWAYNATLLRLISGCTNLEELRLARPDDDGDYIMIHEAGSTIDYMSIFERRYMFEFMFDQMFGKGSSNGINAPLKYFSISNNYRIHNFRGIEKMPDWVEARIAVTGGSHKYLKEITYAKGLYVCLSVSEVMNPYDMIFHMLVDLTICTCTQGWWDLLTHMLQGSPKLRFLTLTNDHCRELPSLETPACWKRPSSVPACLLSSLQAFTWSGYKGRQGDKEVVKYVLRNATGLKKRIFISKSNDFGEKFCMLQELASVPTPSPSCQLLFDRIF</sequence>
<reference key="1">
    <citation type="journal article" date="1999" name="Nature">
        <title>Sequence and analysis of chromosome 4 of the plant Arabidopsis thaliana.</title>
        <authorList>
            <person name="Mayer K.F.X."/>
            <person name="Schueller C."/>
            <person name="Wambutt R."/>
            <person name="Murphy G."/>
            <person name="Volckaert G."/>
            <person name="Pohl T."/>
            <person name="Duesterhoeft A."/>
            <person name="Stiekema W."/>
            <person name="Entian K.-D."/>
            <person name="Terryn N."/>
            <person name="Harris B."/>
            <person name="Ansorge W."/>
            <person name="Brandt P."/>
            <person name="Grivell L.A."/>
            <person name="Rieger M."/>
            <person name="Weichselgartner M."/>
            <person name="de Simone V."/>
            <person name="Obermaier B."/>
            <person name="Mache R."/>
            <person name="Mueller M."/>
            <person name="Kreis M."/>
            <person name="Delseny M."/>
            <person name="Puigdomenech P."/>
            <person name="Watson M."/>
            <person name="Schmidtheini T."/>
            <person name="Reichert B."/>
            <person name="Portetelle D."/>
            <person name="Perez-Alonso M."/>
            <person name="Boutry M."/>
            <person name="Bancroft I."/>
            <person name="Vos P."/>
            <person name="Hoheisel J."/>
            <person name="Zimmermann W."/>
            <person name="Wedler H."/>
            <person name="Ridley P."/>
            <person name="Langham S.-A."/>
            <person name="McCullagh B."/>
            <person name="Bilham L."/>
            <person name="Robben J."/>
            <person name="van der Schueren J."/>
            <person name="Grymonprez B."/>
            <person name="Chuang Y.-J."/>
            <person name="Vandenbussche F."/>
            <person name="Braeken M."/>
            <person name="Weltjens I."/>
            <person name="Voet M."/>
            <person name="Bastiaens I."/>
            <person name="Aert R."/>
            <person name="Defoor E."/>
            <person name="Weitzenegger T."/>
            <person name="Bothe G."/>
            <person name="Ramsperger U."/>
            <person name="Hilbert H."/>
            <person name="Braun M."/>
            <person name="Holzer E."/>
            <person name="Brandt A."/>
            <person name="Peters S."/>
            <person name="van Staveren M."/>
            <person name="Dirkse W."/>
            <person name="Mooijman P."/>
            <person name="Klein Lankhorst R."/>
            <person name="Rose M."/>
            <person name="Hauf J."/>
            <person name="Koetter P."/>
            <person name="Berneiser S."/>
            <person name="Hempel S."/>
            <person name="Feldpausch M."/>
            <person name="Lamberth S."/>
            <person name="Van den Daele H."/>
            <person name="De Keyser A."/>
            <person name="Buysshaert C."/>
            <person name="Gielen J."/>
            <person name="Villarroel R."/>
            <person name="De Clercq R."/>
            <person name="van Montagu M."/>
            <person name="Rogers J."/>
            <person name="Cronin A."/>
            <person name="Quail M.A."/>
            <person name="Bray-Allen S."/>
            <person name="Clark L."/>
            <person name="Doggett J."/>
            <person name="Hall S."/>
            <person name="Kay M."/>
            <person name="Lennard N."/>
            <person name="McLay K."/>
            <person name="Mayes R."/>
            <person name="Pettett A."/>
            <person name="Rajandream M.A."/>
            <person name="Lyne M."/>
            <person name="Benes V."/>
            <person name="Rechmann S."/>
            <person name="Borkova D."/>
            <person name="Bloecker H."/>
            <person name="Scharfe M."/>
            <person name="Grimm M."/>
            <person name="Loehnert T.-H."/>
            <person name="Dose S."/>
            <person name="de Haan M."/>
            <person name="Maarse A.C."/>
            <person name="Schaefer M."/>
            <person name="Mueller-Auer S."/>
            <person name="Gabel C."/>
            <person name="Fuchs M."/>
            <person name="Fartmann B."/>
            <person name="Granderath K."/>
            <person name="Dauner D."/>
            <person name="Herzl A."/>
            <person name="Neumann S."/>
            <person name="Argiriou A."/>
            <person name="Vitale D."/>
            <person name="Liguori R."/>
            <person name="Piravandi E."/>
            <person name="Massenet O."/>
            <person name="Quigley F."/>
            <person name="Clabauld G."/>
            <person name="Muendlein A."/>
            <person name="Felber R."/>
            <person name="Schnabl S."/>
            <person name="Hiller R."/>
            <person name="Schmidt W."/>
            <person name="Lecharny A."/>
            <person name="Aubourg S."/>
            <person name="Chefdor F."/>
            <person name="Cooke R."/>
            <person name="Berger C."/>
            <person name="Monfort A."/>
            <person name="Casacuberta E."/>
            <person name="Gibbons T."/>
            <person name="Weber N."/>
            <person name="Vandenbol M."/>
            <person name="Bargues M."/>
            <person name="Terol J."/>
            <person name="Torres A."/>
            <person name="Perez-Perez A."/>
            <person name="Purnelle B."/>
            <person name="Bent E."/>
            <person name="Johnson S."/>
            <person name="Tacon D."/>
            <person name="Jesse T."/>
            <person name="Heijnen L."/>
            <person name="Schwarz S."/>
            <person name="Scholler P."/>
            <person name="Heber S."/>
            <person name="Francs P."/>
            <person name="Bielke C."/>
            <person name="Frishman D."/>
            <person name="Haase D."/>
            <person name="Lemcke K."/>
            <person name="Mewes H.-W."/>
            <person name="Stocker S."/>
            <person name="Zaccaria P."/>
            <person name="Bevan M."/>
            <person name="Wilson R.K."/>
            <person name="de la Bastide M."/>
            <person name="Habermann K."/>
            <person name="Parnell L."/>
            <person name="Dedhia N."/>
            <person name="Gnoj L."/>
            <person name="Schutz K."/>
            <person name="Huang E."/>
            <person name="Spiegel L."/>
            <person name="Sekhon M."/>
            <person name="Murray J."/>
            <person name="Sheet P."/>
            <person name="Cordes M."/>
            <person name="Abu-Threideh J."/>
            <person name="Stoneking T."/>
            <person name="Kalicki J."/>
            <person name="Graves T."/>
            <person name="Harmon G."/>
            <person name="Edwards J."/>
            <person name="Latreille P."/>
            <person name="Courtney L."/>
            <person name="Cloud J."/>
            <person name="Abbott A."/>
            <person name="Scott K."/>
            <person name="Johnson D."/>
            <person name="Minx P."/>
            <person name="Bentley D."/>
            <person name="Fulton B."/>
            <person name="Miller N."/>
            <person name="Greco T."/>
            <person name="Kemp K."/>
            <person name="Kramer J."/>
            <person name="Fulton L."/>
            <person name="Mardis E."/>
            <person name="Dante M."/>
            <person name="Pepin K."/>
            <person name="Hillier L.W."/>
            <person name="Nelson J."/>
            <person name="Spieth J."/>
            <person name="Ryan E."/>
            <person name="Andrews S."/>
            <person name="Geisel C."/>
            <person name="Layman D."/>
            <person name="Du H."/>
            <person name="Ali J."/>
            <person name="Berghoff A."/>
            <person name="Jones K."/>
            <person name="Drone K."/>
            <person name="Cotton M."/>
            <person name="Joshu C."/>
            <person name="Antonoiu B."/>
            <person name="Zidanic M."/>
            <person name="Strong C."/>
            <person name="Sun H."/>
            <person name="Lamar B."/>
            <person name="Yordan C."/>
            <person name="Ma P."/>
            <person name="Zhong J."/>
            <person name="Preston R."/>
            <person name="Vil D."/>
            <person name="Shekher M."/>
            <person name="Matero A."/>
            <person name="Shah R."/>
            <person name="Swaby I.K."/>
            <person name="O'Shaughnessy A."/>
            <person name="Rodriguez M."/>
            <person name="Hoffman J."/>
            <person name="Till S."/>
            <person name="Granat S."/>
            <person name="Shohdy N."/>
            <person name="Hasegawa A."/>
            <person name="Hameed A."/>
            <person name="Lodhi M."/>
            <person name="Johnson A."/>
            <person name="Chen E."/>
            <person name="Marra M.A."/>
            <person name="Martienssen R."/>
            <person name="McCombie W.R."/>
        </authorList>
    </citation>
    <scope>NUCLEOTIDE SEQUENCE [LARGE SCALE GENOMIC DNA]</scope>
    <source>
        <strain>cv. Columbia</strain>
    </source>
</reference>
<reference key="2">
    <citation type="journal article" date="2017" name="Plant J.">
        <title>Araport11: a complete reannotation of the Arabidopsis thaliana reference genome.</title>
        <authorList>
            <person name="Cheng C.Y."/>
            <person name="Krishnakumar V."/>
            <person name="Chan A.P."/>
            <person name="Thibaud-Nissen F."/>
            <person name="Schobel S."/>
            <person name="Town C.D."/>
        </authorList>
    </citation>
    <scope>GENOME REANNOTATION</scope>
    <source>
        <strain>cv. Columbia</strain>
    </source>
</reference>
<accession>Q9STQ0</accession>
<protein>
    <recommendedName>
        <fullName>Putative F-box/FBD/LRR-repeat protein At4g26350</fullName>
    </recommendedName>
</protein>
<gene>
    <name type="ordered locus">At4g26350</name>
    <name type="ORF">T25K17.160</name>
</gene>
<proteinExistence type="predicted"/>
<feature type="chain" id="PRO_0000283120" description="Putative F-box/FBD/LRR-repeat protein At4g26350">
    <location>
        <begin position="1"/>
        <end position="431"/>
    </location>
</feature>
<feature type="domain" description="F-box" evidence="1">
    <location>
        <begin position="1"/>
        <end position="47"/>
    </location>
</feature>
<feature type="repeat" description="LRR 1">
    <location>
        <begin position="52"/>
        <end position="78"/>
    </location>
</feature>
<feature type="repeat" description="LRR 2">
    <location>
        <begin position="85"/>
        <end position="109"/>
    </location>
</feature>
<feature type="repeat" description="LRR 3">
    <location>
        <begin position="132"/>
        <end position="159"/>
    </location>
</feature>
<feature type="repeat" description="LRR 4">
    <location>
        <begin position="160"/>
        <end position="185"/>
    </location>
</feature>
<feature type="repeat" description="LRR 5">
    <location>
        <begin position="309"/>
        <end position="334"/>
    </location>
</feature>
<feature type="domain" description="FBD">
    <location>
        <begin position="348"/>
        <end position="398"/>
    </location>
</feature>
<name>FDL28_ARATH</name>
<keyword id="KW-0433">Leucine-rich repeat</keyword>
<keyword id="KW-1185">Reference proteome</keyword>
<keyword id="KW-0677">Repeat</keyword>
<organism>
    <name type="scientific">Arabidopsis thaliana</name>
    <name type="common">Mouse-ear cress</name>
    <dbReference type="NCBI Taxonomy" id="3702"/>
    <lineage>
        <taxon>Eukaryota</taxon>
        <taxon>Viridiplantae</taxon>
        <taxon>Streptophyta</taxon>
        <taxon>Embryophyta</taxon>
        <taxon>Tracheophyta</taxon>
        <taxon>Spermatophyta</taxon>
        <taxon>Magnoliopsida</taxon>
        <taxon>eudicotyledons</taxon>
        <taxon>Gunneridae</taxon>
        <taxon>Pentapetalae</taxon>
        <taxon>rosids</taxon>
        <taxon>malvids</taxon>
        <taxon>Brassicales</taxon>
        <taxon>Brassicaceae</taxon>
        <taxon>Camelineae</taxon>
        <taxon>Arabidopsis</taxon>
    </lineage>
</organism>
<dbReference type="EMBL" id="AL049171">
    <property type="protein sequence ID" value="CAB38964.1"/>
    <property type="molecule type" value="Genomic_DNA"/>
</dbReference>
<dbReference type="EMBL" id="AL161565">
    <property type="protein sequence ID" value="CAB79490.1"/>
    <property type="molecule type" value="Genomic_DNA"/>
</dbReference>
<dbReference type="EMBL" id="CP002687">
    <property type="protein sequence ID" value="AEE85188.1"/>
    <property type="molecule type" value="Genomic_DNA"/>
</dbReference>
<dbReference type="PIR" id="T06019">
    <property type="entry name" value="T06019"/>
</dbReference>
<dbReference type="RefSeq" id="NP_194365.1">
    <property type="nucleotide sequence ID" value="NM_118768.1"/>
</dbReference>
<dbReference type="FunCoup" id="Q9STQ0">
    <property type="interactions" value="2"/>
</dbReference>
<dbReference type="GlyGen" id="Q9STQ0">
    <property type="glycosylation" value="1 site"/>
</dbReference>
<dbReference type="PaxDb" id="3702-AT4G26350.1"/>
<dbReference type="EnsemblPlants" id="AT4G26350.1">
    <property type="protein sequence ID" value="AT4G26350.1"/>
    <property type="gene ID" value="AT4G26350"/>
</dbReference>
<dbReference type="GeneID" id="828741"/>
<dbReference type="Gramene" id="AT4G26350.1">
    <property type="protein sequence ID" value="AT4G26350.1"/>
    <property type="gene ID" value="AT4G26350"/>
</dbReference>
<dbReference type="KEGG" id="ath:AT4G26350"/>
<dbReference type="Araport" id="AT4G26350"/>
<dbReference type="TAIR" id="AT4G26350"/>
<dbReference type="HOGENOM" id="CLU_010721_1_2_1"/>
<dbReference type="InParanoid" id="Q9STQ0"/>
<dbReference type="OMA" id="LEISINC"/>
<dbReference type="OrthoDB" id="1022013at2759"/>
<dbReference type="PhylomeDB" id="Q9STQ0"/>
<dbReference type="PRO" id="PR:Q9STQ0"/>
<dbReference type="Proteomes" id="UP000006548">
    <property type="component" value="Chromosome 4"/>
</dbReference>
<dbReference type="ExpressionAtlas" id="Q9STQ0">
    <property type="expression patterns" value="differential"/>
</dbReference>
<dbReference type="CDD" id="cd22160">
    <property type="entry name" value="F-box_AtFBL13-like"/>
    <property type="match status" value="1"/>
</dbReference>
<dbReference type="Gene3D" id="1.20.1280.50">
    <property type="match status" value="1"/>
</dbReference>
<dbReference type="Gene3D" id="3.80.10.10">
    <property type="entry name" value="Ribonuclease Inhibitor"/>
    <property type="match status" value="1"/>
</dbReference>
<dbReference type="InterPro" id="IPR036047">
    <property type="entry name" value="F-box-like_dom_sf"/>
</dbReference>
<dbReference type="InterPro" id="IPR053781">
    <property type="entry name" value="F-box_AtFBL13-like"/>
</dbReference>
<dbReference type="InterPro" id="IPR001810">
    <property type="entry name" value="F-box_dom"/>
</dbReference>
<dbReference type="InterPro" id="IPR006566">
    <property type="entry name" value="FBD"/>
</dbReference>
<dbReference type="InterPro" id="IPR050232">
    <property type="entry name" value="FBL13/AtMIF1-like"/>
</dbReference>
<dbReference type="InterPro" id="IPR032675">
    <property type="entry name" value="LRR_dom_sf"/>
</dbReference>
<dbReference type="InterPro" id="IPR055411">
    <property type="entry name" value="LRR_FXL15/At3g58940/PEG3-like"/>
</dbReference>
<dbReference type="PANTHER" id="PTHR31900:SF34">
    <property type="entry name" value="EMB|CAB62440.1-RELATED"/>
    <property type="match status" value="1"/>
</dbReference>
<dbReference type="PANTHER" id="PTHR31900">
    <property type="entry name" value="F-BOX/RNI SUPERFAMILY PROTEIN-RELATED"/>
    <property type="match status" value="1"/>
</dbReference>
<dbReference type="Pfam" id="PF00646">
    <property type="entry name" value="F-box"/>
    <property type="match status" value="1"/>
</dbReference>
<dbReference type="Pfam" id="PF08387">
    <property type="entry name" value="FBD"/>
    <property type="match status" value="1"/>
</dbReference>
<dbReference type="Pfam" id="PF24758">
    <property type="entry name" value="LRR_At5g56370"/>
    <property type="match status" value="1"/>
</dbReference>
<dbReference type="SMART" id="SM00579">
    <property type="entry name" value="FBD"/>
    <property type="match status" value="1"/>
</dbReference>
<dbReference type="SUPFAM" id="SSF81383">
    <property type="entry name" value="F-box domain"/>
    <property type="match status" value="1"/>
</dbReference>
<dbReference type="SUPFAM" id="SSF52047">
    <property type="entry name" value="RNI-like"/>
    <property type="match status" value="1"/>
</dbReference>
<dbReference type="PROSITE" id="PS50181">
    <property type="entry name" value="FBOX"/>
    <property type="match status" value="1"/>
</dbReference>